<dbReference type="EC" id="1.1.-.-" evidence="1"/>
<dbReference type="EMBL" id="CP000927">
    <property type="protein sequence ID" value="ABZ72735.1"/>
    <property type="molecule type" value="Genomic_DNA"/>
</dbReference>
<dbReference type="SMR" id="B0T7X2"/>
<dbReference type="STRING" id="366602.Caul_3608"/>
<dbReference type="KEGG" id="cak:Caul_3608"/>
<dbReference type="eggNOG" id="COG1304">
    <property type="taxonomic scope" value="Bacteria"/>
</dbReference>
<dbReference type="HOGENOM" id="CLU_020639_0_0_5"/>
<dbReference type="OrthoDB" id="9770452at2"/>
<dbReference type="GO" id="GO:0005886">
    <property type="term" value="C:plasma membrane"/>
    <property type="evidence" value="ECO:0007669"/>
    <property type="project" value="UniProtKB-SubCell"/>
</dbReference>
<dbReference type="GO" id="GO:0010181">
    <property type="term" value="F:FMN binding"/>
    <property type="evidence" value="ECO:0007669"/>
    <property type="project" value="InterPro"/>
</dbReference>
<dbReference type="GO" id="GO:0004459">
    <property type="term" value="F:L-lactate dehydrogenase activity"/>
    <property type="evidence" value="ECO:0007669"/>
    <property type="project" value="UniProtKB-UniRule"/>
</dbReference>
<dbReference type="GO" id="GO:0009060">
    <property type="term" value="P:aerobic respiration"/>
    <property type="evidence" value="ECO:0007669"/>
    <property type="project" value="TreeGrafter"/>
</dbReference>
<dbReference type="GO" id="GO:0006089">
    <property type="term" value="P:lactate metabolic process"/>
    <property type="evidence" value="ECO:0007669"/>
    <property type="project" value="UniProtKB-UniRule"/>
</dbReference>
<dbReference type="CDD" id="cd02809">
    <property type="entry name" value="alpha_hydroxyacid_oxid_FMN"/>
    <property type="match status" value="1"/>
</dbReference>
<dbReference type="FunFam" id="3.20.20.70:FF:000029">
    <property type="entry name" value="L-lactate dehydrogenase"/>
    <property type="match status" value="1"/>
</dbReference>
<dbReference type="Gene3D" id="3.20.20.70">
    <property type="entry name" value="Aldolase class I"/>
    <property type="match status" value="1"/>
</dbReference>
<dbReference type="HAMAP" id="MF_01559">
    <property type="entry name" value="L_lact_dehydr"/>
    <property type="match status" value="1"/>
</dbReference>
<dbReference type="InterPro" id="IPR013785">
    <property type="entry name" value="Aldolase_TIM"/>
</dbReference>
<dbReference type="InterPro" id="IPR012133">
    <property type="entry name" value="Alpha-hydoxy_acid_DH_FMN"/>
</dbReference>
<dbReference type="InterPro" id="IPR000262">
    <property type="entry name" value="FMN-dep_DH"/>
</dbReference>
<dbReference type="InterPro" id="IPR037396">
    <property type="entry name" value="FMN_HAD"/>
</dbReference>
<dbReference type="InterPro" id="IPR008259">
    <property type="entry name" value="FMN_hydac_DH_AS"/>
</dbReference>
<dbReference type="InterPro" id="IPR020920">
    <property type="entry name" value="LldD"/>
</dbReference>
<dbReference type="NCBIfam" id="NF033901">
    <property type="entry name" value="L_lactate_LldD"/>
    <property type="match status" value="1"/>
</dbReference>
<dbReference type="NCBIfam" id="NF008398">
    <property type="entry name" value="PRK11197.1"/>
    <property type="match status" value="1"/>
</dbReference>
<dbReference type="PANTHER" id="PTHR10578:SF85">
    <property type="entry name" value="L-LACTATE DEHYDROGENASE"/>
    <property type="match status" value="1"/>
</dbReference>
<dbReference type="PANTHER" id="PTHR10578">
    <property type="entry name" value="S -2-HYDROXY-ACID OXIDASE-RELATED"/>
    <property type="match status" value="1"/>
</dbReference>
<dbReference type="Pfam" id="PF01070">
    <property type="entry name" value="FMN_dh"/>
    <property type="match status" value="1"/>
</dbReference>
<dbReference type="PIRSF" id="PIRSF000138">
    <property type="entry name" value="Al-hdrx_acd_dh"/>
    <property type="match status" value="1"/>
</dbReference>
<dbReference type="SUPFAM" id="SSF51395">
    <property type="entry name" value="FMN-linked oxidoreductases"/>
    <property type="match status" value="1"/>
</dbReference>
<dbReference type="PROSITE" id="PS00557">
    <property type="entry name" value="FMN_HYDROXY_ACID_DH_1"/>
    <property type="match status" value="1"/>
</dbReference>
<dbReference type="PROSITE" id="PS51349">
    <property type="entry name" value="FMN_HYDROXY_ACID_DH_2"/>
    <property type="match status" value="1"/>
</dbReference>
<accession>B0T7X2</accession>
<gene>
    <name evidence="1" type="primary">lldD</name>
    <name type="ordered locus">Caul_3608</name>
</gene>
<name>LLDD_CAUSK</name>
<keyword id="KW-0997">Cell inner membrane</keyword>
<keyword id="KW-1003">Cell membrane</keyword>
<keyword id="KW-0285">Flavoprotein</keyword>
<keyword id="KW-0288">FMN</keyword>
<keyword id="KW-0472">Membrane</keyword>
<keyword id="KW-0560">Oxidoreductase</keyword>
<evidence type="ECO:0000255" key="1">
    <source>
        <dbReference type="HAMAP-Rule" id="MF_01559"/>
    </source>
</evidence>
<protein>
    <recommendedName>
        <fullName evidence="1">L-lactate dehydrogenase</fullName>
        <ecNumber evidence="1">1.1.-.-</ecNumber>
    </recommendedName>
</protein>
<proteinExistence type="inferred from homology"/>
<reference key="1">
    <citation type="submission" date="2008-01" db="EMBL/GenBank/DDBJ databases">
        <title>Complete sequence of chromosome of Caulobacter sp. K31.</title>
        <authorList>
            <consortium name="US DOE Joint Genome Institute"/>
            <person name="Copeland A."/>
            <person name="Lucas S."/>
            <person name="Lapidus A."/>
            <person name="Barry K."/>
            <person name="Glavina del Rio T."/>
            <person name="Dalin E."/>
            <person name="Tice H."/>
            <person name="Pitluck S."/>
            <person name="Bruce D."/>
            <person name="Goodwin L."/>
            <person name="Thompson L.S."/>
            <person name="Brettin T."/>
            <person name="Detter J.C."/>
            <person name="Han C."/>
            <person name="Schmutz J."/>
            <person name="Larimer F."/>
            <person name="Land M."/>
            <person name="Hauser L."/>
            <person name="Kyrpides N."/>
            <person name="Kim E."/>
            <person name="Stephens C."/>
            <person name="Richardson P."/>
        </authorList>
    </citation>
    <scope>NUCLEOTIDE SEQUENCE [LARGE SCALE GENOMIC DNA]</scope>
    <source>
        <strain>K31</strain>
    </source>
</reference>
<comment type="function">
    <text evidence="1">Catalyzes the conversion of L-lactate to pyruvate. Is coupled to the respiratory chain.</text>
</comment>
<comment type="catalytic activity">
    <reaction evidence="1">
        <text>(S)-lactate + A = pyruvate + AH2</text>
        <dbReference type="Rhea" id="RHEA:45816"/>
        <dbReference type="ChEBI" id="CHEBI:13193"/>
        <dbReference type="ChEBI" id="CHEBI:15361"/>
        <dbReference type="ChEBI" id="CHEBI:16651"/>
        <dbReference type="ChEBI" id="CHEBI:17499"/>
    </reaction>
</comment>
<comment type="cofactor">
    <cofactor evidence="1">
        <name>FMN</name>
        <dbReference type="ChEBI" id="CHEBI:58210"/>
    </cofactor>
</comment>
<comment type="subcellular location">
    <subcellularLocation>
        <location evidence="1">Cell inner membrane</location>
        <topology evidence="1">Peripheral membrane protein</topology>
    </subcellularLocation>
</comment>
<comment type="similarity">
    <text evidence="1">Belongs to the FMN-dependent alpha-hydroxy acid dehydrogenase family.</text>
</comment>
<feature type="chain" id="PRO_0000383416" description="L-lactate dehydrogenase">
    <location>
        <begin position="1"/>
        <end position="380"/>
    </location>
</feature>
<feature type="domain" description="FMN hydroxy acid dehydrogenase" evidence="1">
    <location>
        <begin position="1"/>
        <end position="380"/>
    </location>
</feature>
<feature type="active site" description="Proton acceptor" evidence="1">
    <location>
        <position position="275"/>
    </location>
</feature>
<feature type="binding site" evidence="1">
    <location>
        <position position="24"/>
    </location>
    <ligand>
        <name>substrate</name>
    </ligand>
</feature>
<feature type="binding site" evidence="1">
    <location>
        <position position="106"/>
    </location>
    <ligand>
        <name>FMN</name>
        <dbReference type="ChEBI" id="CHEBI:58210"/>
    </ligand>
</feature>
<feature type="binding site" evidence="1">
    <location>
        <position position="127"/>
    </location>
    <ligand>
        <name>FMN</name>
        <dbReference type="ChEBI" id="CHEBI:58210"/>
    </ligand>
</feature>
<feature type="binding site" evidence="1">
    <location>
        <position position="129"/>
    </location>
    <ligand>
        <name>substrate</name>
    </ligand>
</feature>
<feature type="binding site" evidence="1">
    <location>
        <position position="155"/>
    </location>
    <ligand>
        <name>FMN</name>
        <dbReference type="ChEBI" id="CHEBI:58210"/>
    </ligand>
</feature>
<feature type="binding site" evidence="1">
    <location>
        <position position="164"/>
    </location>
    <ligand>
        <name>substrate</name>
    </ligand>
</feature>
<feature type="binding site" evidence="1">
    <location>
        <position position="251"/>
    </location>
    <ligand>
        <name>FMN</name>
        <dbReference type="ChEBI" id="CHEBI:58210"/>
    </ligand>
</feature>
<feature type="binding site" evidence="1">
    <location>
        <position position="278"/>
    </location>
    <ligand>
        <name>substrate</name>
    </ligand>
</feature>
<feature type="binding site" evidence="1">
    <location>
        <begin position="306"/>
        <end position="330"/>
    </location>
    <ligand>
        <name>FMN</name>
        <dbReference type="ChEBI" id="CHEBI:58210"/>
    </ligand>
</feature>
<sequence>MIISSTTDFREAARRQLPRFLFDYIDGGAYAERTLARNVSDLADISLRQRVLKDVSRVSTRTTLFGVEQTLPVALAPVGLTGMYARRGEVQAARAAAAKGVPFCLSTVSVCDLAEVSRASSAPIWFQLYMLRDRGFMRDLLARAADAGATALVFTVDMPVPGARYRDAHSGMTGPNAAMRRLVQAVFKPGWAWDVGVMGRPHTLGNVAPVLGENTGLEDFMGWLGANFDPSIQWKDLDWIRDQWKGPLILKGVLDPEDAKAAADIGADGIVVSNHGGRQLDGVLSSARALPDIAEAVGDRLTVLADGGVRSGLDVVRMLALGAKGVLLGRAFVYALAARGGPGVSQLLDLIEKEMRVAMALTGVNTLDQIDRSILAKTDR</sequence>
<organism>
    <name type="scientific">Caulobacter sp. (strain K31)</name>
    <dbReference type="NCBI Taxonomy" id="366602"/>
    <lineage>
        <taxon>Bacteria</taxon>
        <taxon>Pseudomonadati</taxon>
        <taxon>Pseudomonadota</taxon>
        <taxon>Alphaproteobacteria</taxon>
        <taxon>Caulobacterales</taxon>
        <taxon>Caulobacteraceae</taxon>
        <taxon>Caulobacter</taxon>
    </lineage>
</organism>